<organism>
    <name type="scientific">Mycobacterium bovis (strain ATCC BAA-935 / AF2122/97)</name>
    <dbReference type="NCBI Taxonomy" id="233413"/>
    <lineage>
        <taxon>Bacteria</taxon>
        <taxon>Bacillati</taxon>
        <taxon>Actinomycetota</taxon>
        <taxon>Actinomycetes</taxon>
        <taxon>Mycobacteriales</taxon>
        <taxon>Mycobacteriaceae</taxon>
        <taxon>Mycobacterium</taxon>
        <taxon>Mycobacterium tuberculosis complex</taxon>
    </lineage>
</organism>
<sequence length="468" mass="50754">MREYDIVVIGSGPGGQKAAIASAKLGKSVAIVERGRMLGGVCVNTGTIPSKTLREAVLYLTGMNQRELYGASYRVKDRITPADLLARTQHVIGKEVDVVRNQLMRNRVDLIVGHGRFIDPHTILVEDQARREKTTVTGDYIIIATGTRPARPSGVEFDEERVLDSDGILDLKSLPSSMVVVGAGVIGIEYASMFAALGTKVTVVEKRDNMLDFCDPEVVEALKFHLRDLAVTFRFGEEVTAVDVGSAGTVTTLASGKQIPAETVMYSAGRQGQTDHLDLHNAGLEVQGRGRIFVDDRFQTKVDHIYAVGDVIGFPALAATSMEQGRLAAYHAFGEPTDGITELQPIGIYSIPEVSYVGATEVELTKSSIPYEVGVARYRELARGQIAGDSYGMLKLLVSTEDLKLLGVHIFGTSATEMVHIGQAVMGCGGSVEYLVDAVFNYPTFSEAYKNAALDVMNKMRALNQFRR</sequence>
<keyword id="KW-0963">Cytoplasm</keyword>
<keyword id="KW-0274">FAD</keyword>
<keyword id="KW-0285">Flavoprotein</keyword>
<keyword id="KW-0520">NAD</keyword>
<keyword id="KW-0521">NADP</keyword>
<keyword id="KW-0560">Oxidoreductase</keyword>
<keyword id="KW-1185">Reference proteome</keyword>
<comment type="function">
    <text evidence="1">Conversion of NADPH, generated by peripheral catabolic pathways, to NADH, which can enter the respiratory chain for energy generation.</text>
</comment>
<comment type="catalytic activity">
    <reaction>
        <text>NAD(+) + NADPH = NADH + NADP(+)</text>
        <dbReference type="Rhea" id="RHEA:11692"/>
        <dbReference type="ChEBI" id="CHEBI:57540"/>
        <dbReference type="ChEBI" id="CHEBI:57783"/>
        <dbReference type="ChEBI" id="CHEBI:57945"/>
        <dbReference type="ChEBI" id="CHEBI:58349"/>
        <dbReference type="EC" id="1.6.1.1"/>
    </reaction>
</comment>
<comment type="cofactor">
    <cofactor evidence="1">
        <name>FAD</name>
        <dbReference type="ChEBI" id="CHEBI:57692"/>
    </cofactor>
    <text evidence="1">Binds 1 FAD per subunit.</text>
</comment>
<comment type="subcellular location">
    <subcellularLocation>
        <location evidence="1">Cytoplasm</location>
    </subcellularLocation>
</comment>
<comment type="similarity">
    <text evidence="2">Belongs to the class-I pyridine nucleotide-disulfide oxidoreductase family.</text>
</comment>
<accession>P66007</accession>
<accession>A0A1R3Y1Z0</accession>
<accession>O07212</accession>
<accession>X2BM22</accession>
<proteinExistence type="inferred from homology"/>
<gene>
    <name type="primary">sthA</name>
    <name type="ordered locus">BQ2027_MB2732</name>
</gene>
<name>STHA_MYCBO</name>
<dbReference type="EC" id="1.6.1.1"/>
<dbReference type="EMBL" id="LT708304">
    <property type="protein sequence ID" value="SIU01350.1"/>
    <property type="molecule type" value="Genomic_DNA"/>
</dbReference>
<dbReference type="RefSeq" id="NP_856378.1">
    <property type="nucleotide sequence ID" value="NC_002945.3"/>
</dbReference>
<dbReference type="RefSeq" id="WP_003900556.1">
    <property type="nucleotide sequence ID" value="NC_002945.4"/>
</dbReference>
<dbReference type="SMR" id="P66007"/>
<dbReference type="GeneID" id="45426700"/>
<dbReference type="KEGG" id="mbo:BQ2027_MB2732"/>
<dbReference type="PATRIC" id="fig|233413.5.peg.2994"/>
<dbReference type="Proteomes" id="UP000001419">
    <property type="component" value="Chromosome"/>
</dbReference>
<dbReference type="GO" id="GO:0005829">
    <property type="term" value="C:cytosol"/>
    <property type="evidence" value="ECO:0007669"/>
    <property type="project" value="TreeGrafter"/>
</dbReference>
<dbReference type="GO" id="GO:0004148">
    <property type="term" value="F:dihydrolipoyl dehydrogenase (NADH) activity"/>
    <property type="evidence" value="ECO:0007669"/>
    <property type="project" value="TreeGrafter"/>
</dbReference>
<dbReference type="GO" id="GO:0050660">
    <property type="term" value="F:flavin adenine dinucleotide binding"/>
    <property type="evidence" value="ECO:0007669"/>
    <property type="project" value="TreeGrafter"/>
</dbReference>
<dbReference type="GO" id="GO:0003957">
    <property type="term" value="F:NAD(P)+ transhydrogenase (Si-specific) activity"/>
    <property type="evidence" value="ECO:0007669"/>
    <property type="project" value="UniProtKB-UniRule"/>
</dbReference>
<dbReference type="GO" id="GO:0006103">
    <property type="term" value="P:2-oxoglutarate metabolic process"/>
    <property type="evidence" value="ECO:0007669"/>
    <property type="project" value="TreeGrafter"/>
</dbReference>
<dbReference type="GO" id="GO:0006739">
    <property type="term" value="P:NADP metabolic process"/>
    <property type="evidence" value="ECO:0007669"/>
    <property type="project" value="UniProtKB-UniRule"/>
</dbReference>
<dbReference type="FunFam" id="3.30.390.30:FF:000001">
    <property type="entry name" value="Dihydrolipoyl dehydrogenase"/>
    <property type="match status" value="1"/>
</dbReference>
<dbReference type="FunFam" id="3.50.50.60:FF:000008">
    <property type="entry name" value="Soluble pyridine nucleotide transhydrogenase"/>
    <property type="match status" value="1"/>
</dbReference>
<dbReference type="Gene3D" id="3.30.390.30">
    <property type="match status" value="1"/>
</dbReference>
<dbReference type="Gene3D" id="3.50.50.60">
    <property type="entry name" value="FAD/NAD(P)-binding domain"/>
    <property type="match status" value="2"/>
</dbReference>
<dbReference type="HAMAP" id="MF_00247">
    <property type="entry name" value="SthA"/>
    <property type="match status" value="1"/>
</dbReference>
<dbReference type="InterPro" id="IPR050151">
    <property type="entry name" value="Class-I_Pyr_Nuc-Dis_Oxidored"/>
</dbReference>
<dbReference type="InterPro" id="IPR036188">
    <property type="entry name" value="FAD/NAD-bd_sf"/>
</dbReference>
<dbReference type="InterPro" id="IPR023753">
    <property type="entry name" value="FAD/NAD-binding_dom"/>
</dbReference>
<dbReference type="InterPro" id="IPR016156">
    <property type="entry name" value="FAD/NAD-linked_Rdtase_dimer_sf"/>
</dbReference>
<dbReference type="InterPro" id="IPR001100">
    <property type="entry name" value="Pyr_nuc-diS_OxRdtase"/>
</dbReference>
<dbReference type="InterPro" id="IPR004099">
    <property type="entry name" value="Pyr_nucl-diS_OxRdtase_dimer"/>
</dbReference>
<dbReference type="InterPro" id="IPR022962">
    <property type="entry name" value="STH_gammaproteobact"/>
</dbReference>
<dbReference type="NCBIfam" id="NF003585">
    <property type="entry name" value="PRK05249.1"/>
    <property type="match status" value="1"/>
</dbReference>
<dbReference type="PANTHER" id="PTHR22912">
    <property type="entry name" value="DISULFIDE OXIDOREDUCTASE"/>
    <property type="match status" value="1"/>
</dbReference>
<dbReference type="PANTHER" id="PTHR22912:SF93">
    <property type="entry name" value="SOLUBLE PYRIDINE NUCLEOTIDE TRANSHYDROGENASE"/>
    <property type="match status" value="1"/>
</dbReference>
<dbReference type="Pfam" id="PF07992">
    <property type="entry name" value="Pyr_redox_2"/>
    <property type="match status" value="1"/>
</dbReference>
<dbReference type="Pfam" id="PF02852">
    <property type="entry name" value="Pyr_redox_dim"/>
    <property type="match status" value="1"/>
</dbReference>
<dbReference type="PIRSF" id="PIRSF000350">
    <property type="entry name" value="Mercury_reductase_MerA"/>
    <property type="match status" value="1"/>
</dbReference>
<dbReference type="PRINTS" id="PR00368">
    <property type="entry name" value="FADPNR"/>
</dbReference>
<dbReference type="PRINTS" id="PR00411">
    <property type="entry name" value="PNDRDTASEI"/>
</dbReference>
<dbReference type="SUPFAM" id="SSF51905">
    <property type="entry name" value="FAD/NAD(P)-binding domain"/>
    <property type="match status" value="1"/>
</dbReference>
<dbReference type="SUPFAM" id="SSF55424">
    <property type="entry name" value="FAD/NAD-linked reductases, dimerisation (C-terminal) domain"/>
    <property type="match status" value="1"/>
</dbReference>
<reference key="1">
    <citation type="journal article" date="2003" name="Proc. Natl. Acad. Sci. U.S.A.">
        <title>The complete genome sequence of Mycobacterium bovis.</title>
        <authorList>
            <person name="Garnier T."/>
            <person name="Eiglmeier K."/>
            <person name="Camus J.-C."/>
            <person name="Medina N."/>
            <person name="Mansoor H."/>
            <person name="Pryor M."/>
            <person name="Duthoy S."/>
            <person name="Grondin S."/>
            <person name="Lacroix C."/>
            <person name="Monsempe C."/>
            <person name="Simon S."/>
            <person name="Harris B."/>
            <person name="Atkin R."/>
            <person name="Doggett J."/>
            <person name="Mayes R."/>
            <person name="Keating L."/>
            <person name="Wheeler P.R."/>
            <person name="Parkhill J."/>
            <person name="Barrell B.G."/>
            <person name="Cole S.T."/>
            <person name="Gordon S.V."/>
            <person name="Hewinson R.G."/>
        </authorList>
    </citation>
    <scope>NUCLEOTIDE SEQUENCE [LARGE SCALE GENOMIC DNA]</scope>
    <source>
        <strain>ATCC BAA-935 / AF2122/97</strain>
    </source>
</reference>
<reference key="2">
    <citation type="journal article" date="2017" name="Genome Announc.">
        <title>Updated reference genome sequence and annotation of Mycobacterium bovis AF2122/97.</title>
        <authorList>
            <person name="Malone K.M."/>
            <person name="Farrell D."/>
            <person name="Stuber T.P."/>
            <person name="Schubert O.T."/>
            <person name="Aebersold R."/>
            <person name="Robbe-Austerman S."/>
            <person name="Gordon S.V."/>
        </authorList>
    </citation>
    <scope>NUCLEOTIDE SEQUENCE [LARGE SCALE GENOMIC DNA]</scope>
    <scope>GENOME REANNOTATION</scope>
    <source>
        <strain>ATCC BAA-935 / AF2122/97</strain>
    </source>
</reference>
<feature type="chain" id="PRO_0000068066" description="Probable soluble pyridine nucleotide transhydrogenase">
    <location>
        <begin position="1"/>
        <end position="468"/>
    </location>
</feature>
<feature type="binding site" evidence="1">
    <location>
        <begin position="33"/>
        <end position="42"/>
    </location>
    <ligand>
        <name>FAD</name>
        <dbReference type="ChEBI" id="CHEBI:57692"/>
    </ligand>
</feature>
<protein>
    <recommendedName>
        <fullName>Probable soluble pyridine nucleotide transhydrogenase</fullName>
        <shortName>STH</shortName>
        <ecNumber>1.6.1.1</ecNumber>
    </recommendedName>
    <alternativeName>
        <fullName>NAD(P)(+) transhydrogenase [B-specific]</fullName>
    </alternativeName>
</protein>
<evidence type="ECO:0000250" key="1"/>
<evidence type="ECO:0000305" key="2"/>